<feature type="chain" id="PRO_1000081809" description="Small ribosomal subunit protein uS9">
    <location>
        <begin position="1"/>
        <end position="130"/>
    </location>
</feature>
<feature type="region of interest" description="Disordered" evidence="2">
    <location>
        <begin position="109"/>
        <end position="130"/>
    </location>
</feature>
<feature type="compositionally biased region" description="Basic residues" evidence="2">
    <location>
        <begin position="111"/>
        <end position="130"/>
    </location>
</feature>
<sequence length="130" mass="14650">MAKVQYFGTGRRKKSIARVRLVPGEGKITINKRSIEEYFGLETLRVIVNQPLVLTSTNGKFDVLVNVHGGGFTGQAGAIRHGISRALLKADENLRLELKKAGFLTRDPRMKERKKYGLKKARRAPQFSKR</sequence>
<gene>
    <name evidence="1" type="primary">rpsI</name>
    <name type="ordered locus">CKL_0259</name>
</gene>
<evidence type="ECO:0000255" key="1">
    <source>
        <dbReference type="HAMAP-Rule" id="MF_00532"/>
    </source>
</evidence>
<evidence type="ECO:0000256" key="2">
    <source>
        <dbReference type="SAM" id="MobiDB-lite"/>
    </source>
</evidence>
<evidence type="ECO:0000305" key="3"/>
<reference key="1">
    <citation type="journal article" date="2008" name="Proc. Natl. Acad. Sci. U.S.A.">
        <title>The genome of Clostridium kluyveri, a strict anaerobe with unique metabolic features.</title>
        <authorList>
            <person name="Seedorf H."/>
            <person name="Fricke W.F."/>
            <person name="Veith B."/>
            <person name="Brueggemann H."/>
            <person name="Liesegang H."/>
            <person name="Strittmatter A."/>
            <person name="Miethke M."/>
            <person name="Buckel W."/>
            <person name="Hinderberger J."/>
            <person name="Li F."/>
            <person name="Hagemeier C."/>
            <person name="Thauer R.K."/>
            <person name="Gottschalk G."/>
        </authorList>
    </citation>
    <scope>NUCLEOTIDE SEQUENCE [LARGE SCALE GENOMIC DNA]</scope>
    <source>
        <strain>ATCC 8527 / DSM 555 / NBRC 12016 / NCIMB 10680 / K1</strain>
    </source>
</reference>
<accession>A5N4T2</accession>
<protein>
    <recommendedName>
        <fullName evidence="1">Small ribosomal subunit protein uS9</fullName>
    </recommendedName>
    <alternativeName>
        <fullName evidence="3">30S ribosomal protein S9</fullName>
    </alternativeName>
</protein>
<organism>
    <name type="scientific">Clostridium kluyveri (strain ATCC 8527 / DSM 555 / NBRC 12016 / NCIMB 10680 / K1)</name>
    <dbReference type="NCBI Taxonomy" id="431943"/>
    <lineage>
        <taxon>Bacteria</taxon>
        <taxon>Bacillati</taxon>
        <taxon>Bacillota</taxon>
        <taxon>Clostridia</taxon>
        <taxon>Eubacteriales</taxon>
        <taxon>Clostridiaceae</taxon>
        <taxon>Clostridium</taxon>
    </lineage>
</organism>
<comment type="similarity">
    <text evidence="1">Belongs to the universal ribosomal protein uS9 family.</text>
</comment>
<proteinExistence type="inferred from homology"/>
<name>RS9_CLOK5</name>
<dbReference type="EMBL" id="CP000673">
    <property type="protein sequence ID" value="EDK32313.1"/>
    <property type="molecule type" value="Genomic_DNA"/>
</dbReference>
<dbReference type="RefSeq" id="WP_011988838.1">
    <property type="nucleotide sequence ID" value="NC_009706.1"/>
</dbReference>
<dbReference type="SMR" id="A5N4T2"/>
<dbReference type="STRING" id="431943.CKL_0259"/>
<dbReference type="KEGG" id="ckl:CKL_0259"/>
<dbReference type="eggNOG" id="COG0103">
    <property type="taxonomic scope" value="Bacteria"/>
</dbReference>
<dbReference type="HOGENOM" id="CLU_046483_2_1_9"/>
<dbReference type="Proteomes" id="UP000002411">
    <property type="component" value="Chromosome"/>
</dbReference>
<dbReference type="GO" id="GO:0022627">
    <property type="term" value="C:cytosolic small ribosomal subunit"/>
    <property type="evidence" value="ECO:0007669"/>
    <property type="project" value="TreeGrafter"/>
</dbReference>
<dbReference type="GO" id="GO:0003723">
    <property type="term" value="F:RNA binding"/>
    <property type="evidence" value="ECO:0007669"/>
    <property type="project" value="TreeGrafter"/>
</dbReference>
<dbReference type="GO" id="GO:0003735">
    <property type="term" value="F:structural constituent of ribosome"/>
    <property type="evidence" value="ECO:0007669"/>
    <property type="project" value="InterPro"/>
</dbReference>
<dbReference type="GO" id="GO:0006412">
    <property type="term" value="P:translation"/>
    <property type="evidence" value="ECO:0007669"/>
    <property type="project" value="UniProtKB-UniRule"/>
</dbReference>
<dbReference type="FunFam" id="3.30.230.10:FF:000001">
    <property type="entry name" value="30S ribosomal protein S9"/>
    <property type="match status" value="1"/>
</dbReference>
<dbReference type="Gene3D" id="3.30.230.10">
    <property type="match status" value="1"/>
</dbReference>
<dbReference type="HAMAP" id="MF_00532_B">
    <property type="entry name" value="Ribosomal_uS9_B"/>
    <property type="match status" value="1"/>
</dbReference>
<dbReference type="InterPro" id="IPR020568">
    <property type="entry name" value="Ribosomal_Su5_D2-typ_SF"/>
</dbReference>
<dbReference type="InterPro" id="IPR000754">
    <property type="entry name" value="Ribosomal_uS9"/>
</dbReference>
<dbReference type="InterPro" id="IPR023035">
    <property type="entry name" value="Ribosomal_uS9_bac/plastid"/>
</dbReference>
<dbReference type="InterPro" id="IPR020574">
    <property type="entry name" value="Ribosomal_uS9_CS"/>
</dbReference>
<dbReference type="InterPro" id="IPR014721">
    <property type="entry name" value="Ribsml_uS5_D2-typ_fold_subgr"/>
</dbReference>
<dbReference type="NCBIfam" id="NF001099">
    <property type="entry name" value="PRK00132.1"/>
    <property type="match status" value="1"/>
</dbReference>
<dbReference type="PANTHER" id="PTHR21569">
    <property type="entry name" value="RIBOSOMAL PROTEIN S9"/>
    <property type="match status" value="1"/>
</dbReference>
<dbReference type="PANTHER" id="PTHR21569:SF1">
    <property type="entry name" value="SMALL RIBOSOMAL SUBUNIT PROTEIN US9M"/>
    <property type="match status" value="1"/>
</dbReference>
<dbReference type="Pfam" id="PF00380">
    <property type="entry name" value="Ribosomal_S9"/>
    <property type="match status" value="1"/>
</dbReference>
<dbReference type="SUPFAM" id="SSF54211">
    <property type="entry name" value="Ribosomal protein S5 domain 2-like"/>
    <property type="match status" value="1"/>
</dbReference>
<dbReference type="PROSITE" id="PS00360">
    <property type="entry name" value="RIBOSOMAL_S9"/>
    <property type="match status" value="1"/>
</dbReference>
<keyword id="KW-1185">Reference proteome</keyword>
<keyword id="KW-0687">Ribonucleoprotein</keyword>
<keyword id="KW-0689">Ribosomal protein</keyword>